<gene>
    <name evidence="5" type="primary">4CL2</name>
</gene>
<accession>A0A2H5AIY4</accession>
<feature type="chain" id="PRO_0000450636" description="4-coumarate-CoA ligase 2">
    <location>
        <begin position="1"/>
        <end position="569"/>
    </location>
</feature>
<feature type="region of interest" description="Disordered" evidence="3">
    <location>
        <begin position="1"/>
        <end position="24"/>
    </location>
</feature>
<feature type="region of interest" description="SBD1" evidence="1">
    <location>
        <begin position="290"/>
        <end position="359"/>
    </location>
</feature>
<feature type="region of interest" description="SBD2" evidence="1">
    <location>
        <begin position="360"/>
        <end position="427"/>
    </location>
</feature>
<feature type="binding site" evidence="2">
    <location>
        <begin position="216"/>
        <end position="220"/>
    </location>
    <ligand>
        <name>ATP</name>
        <dbReference type="ChEBI" id="CHEBI:30616"/>
    </ligand>
</feature>
<feature type="binding site" evidence="2">
    <location>
        <position position="265"/>
    </location>
    <ligand>
        <name>ATP</name>
        <dbReference type="ChEBI" id="CHEBI:30616"/>
    </ligand>
</feature>
<feature type="binding site" evidence="2">
    <location>
        <begin position="337"/>
        <end position="339"/>
    </location>
    <ligand>
        <name>ATP</name>
        <dbReference type="ChEBI" id="CHEBI:30616"/>
    </ligand>
</feature>
<feature type="binding site" evidence="2">
    <location>
        <begin position="359"/>
        <end position="360"/>
    </location>
    <ligand>
        <name>ATP</name>
        <dbReference type="ChEBI" id="CHEBI:30616"/>
    </ligand>
</feature>
<feature type="binding site" evidence="2">
    <location>
        <position position="364"/>
    </location>
    <ligand>
        <name>ATP</name>
        <dbReference type="ChEBI" id="CHEBI:30616"/>
    </ligand>
</feature>
<feature type="binding site" evidence="2">
    <location>
        <position position="448"/>
    </location>
    <ligand>
        <name>ATP</name>
        <dbReference type="ChEBI" id="CHEBI:30616"/>
    </ligand>
</feature>
<feature type="binding site" evidence="2">
    <location>
        <position position="463"/>
    </location>
    <ligand>
        <name>ATP</name>
        <dbReference type="ChEBI" id="CHEBI:30616"/>
    </ligand>
</feature>
<feature type="binding site" evidence="2">
    <location>
        <position position="554"/>
    </location>
    <ligand>
        <name>ATP</name>
        <dbReference type="ChEBI" id="CHEBI:30616"/>
    </ligand>
</feature>
<comment type="function">
    <text evidence="1">Produces CoA thioesters of a variety of hydroxy- and methoxy-substituted cinnamic acids, which are used to synthesize several phenylpropanoid-derived compounds, including anthocyanins, flavonoids, isoflavonoids, coumarins, lignin, suberin and wall-bound phenolics.</text>
</comment>
<comment type="catalytic activity">
    <reaction evidence="1">
        <text>(E)-4-coumarate + ATP + CoA = (E)-4-coumaroyl-CoA + AMP + diphosphate</text>
        <dbReference type="Rhea" id="RHEA:19641"/>
        <dbReference type="ChEBI" id="CHEBI:12876"/>
        <dbReference type="ChEBI" id="CHEBI:30616"/>
        <dbReference type="ChEBI" id="CHEBI:33019"/>
        <dbReference type="ChEBI" id="CHEBI:57287"/>
        <dbReference type="ChEBI" id="CHEBI:85008"/>
        <dbReference type="ChEBI" id="CHEBI:456215"/>
        <dbReference type="EC" id="6.2.1.12"/>
    </reaction>
    <physiologicalReaction direction="left-to-right" evidence="1">
        <dbReference type="Rhea" id="RHEA:19642"/>
    </physiologicalReaction>
</comment>
<comment type="pathway">
    <text evidence="1">Phytoalexin biosynthesis; 3,4',5-trihydroxystilbene biosynthesis; 3,4',5-trihydroxystilbene from trans-4-coumarate: step 1/2.</text>
</comment>
<comment type="tissue specificity">
    <text evidence="4">Mostly expressed in stems, and, to a lower extent, in bulbs.</text>
</comment>
<comment type="domain">
    <text evidence="1">Both substrate-binding domains (SBD1 and SBD2) are involved in the substrate recognition, and are sufficient to confer the substrate specificity.</text>
</comment>
<comment type="similarity">
    <text evidence="6">Belongs to the ATP-dependent AMP-binding enzyme family.</text>
</comment>
<evidence type="ECO:0000250" key="1">
    <source>
        <dbReference type="UniProtKB" id="Q42524"/>
    </source>
</evidence>
<evidence type="ECO:0000250" key="2">
    <source>
        <dbReference type="UniProtKB" id="Q9SMT7"/>
    </source>
</evidence>
<evidence type="ECO:0000256" key="3">
    <source>
        <dbReference type="SAM" id="MobiDB-lite"/>
    </source>
</evidence>
<evidence type="ECO:0000269" key="4">
    <source>
    </source>
</evidence>
<evidence type="ECO:0000303" key="5">
    <source>
    </source>
</evidence>
<evidence type="ECO:0000305" key="6"/>
<organism>
    <name type="scientific">Narcissus pseudonarcissus</name>
    <name type="common">Daffodil</name>
    <dbReference type="NCBI Taxonomy" id="39639"/>
    <lineage>
        <taxon>Eukaryota</taxon>
        <taxon>Viridiplantae</taxon>
        <taxon>Streptophyta</taxon>
        <taxon>Embryophyta</taxon>
        <taxon>Tracheophyta</taxon>
        <taxon>Spermatophyta</taxon>
        <taxon>Magnoliopsida</taxon>
        <taxon>Liliopsida</taxon>
        <taxon>Asparagales</taxon>
        <taxon>Amaryllidaceae</taxon>
        <taxon>Amaryllidoideae</taxon>
        <taxon>Narcissus</taxon>
    </lineage>
</organism>
<reference key="1">
    <citation type="journal article" date="2017" name="Sci. Rep.">
        <title>Transcriptome and metabolome profiling of Narcissus pseudonarcissus 'King Alfred' reveal components of Amaryllidaceae alkaloid metabolism.</title>
        <authorList>
            <person name="Singh A."/>
            <person name="Desgagne-Penix I."/>
        </authorList>
    </citation>
    <scope>NUCLEOTIDE SEQUENCE [MRNA]</scope>
    <scope>REVIEW ON THE AMARYLLIDACEAE ALKALOID METABOLISM</scope>
    <scope>PATHWAY</scope>
    <scope>TISSUE SPECIFICITY</scope>
    <scope>GENE FAMILY</scope>
    <scope>NOMENCLATURE</scope>
    <source>
        <strain>cv. King Alfred</strain>
        <tissue>Bulb</tissue>
    </source>
</reference>
<keyword id="KW-0067">ATP-binding</keyword>
<keyword id="KW-0436">Ligase</keyword>
<keyword id="KW-0547">Nucleotide-binding</keyword>
<keyword id="KW-0587">Phenylpropanoid metabolism</keyword>
<name>4CL2_NARPS</name>
<protein>
    <recommendedName>
        <fullName evidence="5">4-coumarate-CoA ligase 2</fullName>
        <ecNumber evidence="1">6.2.1.12</ecNumber>
    </recommendedName>
</protein>
<dbReference type="EC" id="6.2.1.12" evidence="1"/>
<dbReference type="EMBL" id="MF416094">
    <property type="protein sequence ID" value="AUG71939.1"/>
    <property type="molecule type" value="mRNA"/>
</dbReference>
<dbReference type="SMR" id="A0A2H5AIY4"/>
<dbReference type="UniPathway" id="UPA00372">
    <property type="reaction ID" value="UER00547"/>
</dbReference>
<dbReference type="GO" id="GO:0016207">
    <property type="term" value="F:4-coumarate-CoA ligase activity"/>
    <property type="evidence" value="ECO:0007669"/>
    <property type="project" value="UniProtKB-EC"/>
</dbReference>
<dbReference type="GO" id="GO:0005524">
    <property type="term" value="F:ATP binding"/>
    <property type="evidence" value="ECO:0007669"/>
    <property type="project" value="UniProtKB-KW"/>
</dbReference>
<dbReference type="GO" id="GO:0106290">
    <property type="term" value="F:trans-cinnamate-CoA ligase activity"/>
    <property type="evidence" value="ECO:0007669"/>
    <property type="project" value="UniProtKB-ARBA"/>
</dbReference>
<dbReference type="GO" id="GO:0009698">
    <property type="term" value="P:phenylpropanoid metabolic process"/>
    <property type="evidence" value="ECO:0007669"/>
    <property type="project" value="UniProtKB-KW"/>
</dbReference>
<dbReference type="CDD" id="cd05904">
    <property type="entry name" value="4CL"/>
    <property type="match status" value="1"/>
</dbReference>
<dbReference type="FunFam" id="3.30.300.30:FF:000007">
    <property type="entry name" value="4-coumarate--CoA ligase 2"/>
    <property type="match status" value="1"/>
</dbReference>
<dbReference type="FunFam" id="3.40.50.12780:FF:000003">
    <property type="entry name" value="Long-chain-fatty-acid--CoA ligase FadD"/>
    <property type="match status" value="1"/>
</dbReference>
<dbReference type="Gene3D" id="3.30.300.30">
    <property type="match status" value="1"/>
</dbReference>
<dbReference type="Gene3D" id="3.40.50.12780">
    <property type="entry name" value="N-terminal domain of ligase-like"/>
    <property type="match status" value="1"/>
</dbReference>
<dbReference type="InterPro" id="IPR025110">
    <property type="entry name" value="AMP-bd_C"/>
</dbReference>
<dbReference type="InterPro" id="IPR045851">
    <property type="entry name" value="AMP-bd_C_sf"/>
</dbReference>
<dbReference type="InterPro" id="IPR020845">
    <property type="entry name" value="AMP-binding_CS"/>
</dbReference>
<dbReference type="InterPro" id="IPR000873">
    <property type="entry name" value="AMP-dep_synth/lig_dom"/>
</dbReference>
<dbReference type="InterPro" id="IPR042099">
    <property type="entry name" value="ANL_N_sf"/>
</dbReference>
<dbReference type="PANTHER" id="PTHR24096:SF169">
    <property type="entry name" value="4-COUMARATE--COA LIGASE 3"/>
    <property type="match status" value="1"/>
</dbReference>
<dbReference type="PANTHER" id="PTHR24096">
    <property type="entry name" value="LONG-CHAIN-FATTY-ACID--COA LIGASE"/>
    <property type="match status" value="1"/>
</dbReference>
<dbReference type="Pfam" id="PF00501">
    <property type="entry name" value="AMP-binding"/>
    <property type="match status" value="1"/>
</dbReference>
<dbReference type="Pfam" id="PF13193">
    <property type="entry name" value="AMP-binding_C"/>
    <property type="match status" value="1"/>
</dbReference>
<dbReference type="SUPFAM" id="SSF56801">
    <property type="entry name" value="Acetyl-CoA synthetase-like"/>
    <property type="match status" value="1"/>
</dbReference>
<dbReference type="PROSITE" id="PS00455">
    <property type="entry name" value="AMP_BINDING"/>
    <property type="match status" value="1"/>
</dbReference>
<sequence>MITIAESHPQIHHSPPDTTAPSTPPTATIFRSRLPDIVLSNHLPLHEYLFENTLTSPSPCIISASTGRSYSFAETHLLSRKTASFLSSRCGVRRGGVVMLLLHNCPEFVFSFLGSSMLGAVTTAANPFCTPQEIKKQLLASGATVIITQSAYASKISRDDDVEDLIVVTVSDNELERHAAPPEGCVSFSEVESADEDAVPDAVGVGPEDAVAMPFSSGTTGLPKGVVLTHKSMTSSVGQIVDGENPNLHLRKGEDVLLCVLPLFHIFSLNSVLLCGLRTGAAVVIMARFEMEGMLETIQRWGVSVAAVVPPLVLALAKNPLVEKYDMGTVRMVLSGAAPLGKELEAVLKGRLPQAVLGQGYGMTEAGPVISMSPGFAKQPTPVKSGSCGTVVRNAELKVMDPETGFSLGRNQPGEICVRGPQIMKGYLNDPEATSATIDVEGWLHTGDVGYVDDDDEVFIVDRVKELIKFKGFQVPPAELEALLLGHPSIADAAVIPQNDEVAGEVPVAFVVPSKSSDLTEEIVKEFISKQVVFYKRIHRVYFIHAIPKSPSGKILRKDLRAKVASFSS</sequence>
<proteinExistence type="evidence at transcript level"/>